<keyword id="KW-0119">Carbohydrate metabolism</keyword>
<keyword id="KW-0413">Isomerase</keyword>
<keyword id="KW-0521">NADP</keyword>
<keyword id="KW-1185">Reference proteome</keyword>
<evidence type="ECO:0000255" key="1">
    <source>
        <dbReference type="HAMAP-Rule" id="MF_01601"/>
    </source>
</evidence>
<evidence type="ECO:0000305" key="2"/>
<reference key="1">
    <citation type="journal article" date="2000" name="Nature">
        <title>Complete genome sequence of Pseudomonas aeruginosa PAO1, an opportunistic pathogen.</title>
        <authorList>
            <person name="Stover C.K."/>
            <person name="Pham X.-Q.T."/>
            <person name="Erwin A.L."/>
            <person name="Mizoguchi S.D."/>
            <person name="Warrener P."/>
            <person name="Hickey M.J."/>
            <person name="Brinkman F.S.L."/>
            <person name="Hufnagle W.O."/>
            <person name="Kowalik D.J."/>
            <person name="Lagrou M."/>
            <person name="Garber R.L."/>
            <person name="Goltry L."/>
            <person name="Tolentino E."/>
            <person name="Westbrock-Wadman S."/>
            <person name="Yuan Y."/>
            <person name="Brody L.L."/>
            <person name="Coulter S.N."/>
            <person name="Folger K.R."/>
            <person name="Kas A."/>
            <person name="Larbig K."/>
            <person name="Lim R.M."/>
            <person name="Smith K.A."/>
            <person name="Spencer D.H."/>
            <person name="Wong G.K.-S."/>
            <person name="Wu Z."/>
            <person name="Paulsen I.T."/>
            <person name="Reizer J."/>
            <person name="Saier M.H. Jr."/>
            <person name="Hancock R.E.W."/>
            <person name="Lory S."/>
            <person name="Olson M.V."/>
        </authorList>
    </citation>
    <scope>NUCLEOTIDE SEQUENCE [LARGE SCALE GENOMIC DNA]</scope>
    <source>
        <strain>ATCC 15692 / DSM 22644 / CIP 104116 / JCM 14847 / LMG 12228 / 1C / PRS 101 / PAO1</strain>
    </source>
</reference>
<proteinExistence type="inferred from homology"/>
<name>HLDD_PSEAE</name>
<feature type="chain" id="PRO_0000205805" description="ADP-L-glycero-D-manno-heptose-6-epimerase">
    <location>
        <begin position="1"/>
        <end position="330"/>
    </location>
</feature>
<feature type="active site" description="Proton acceptor" evidence="1">
    <location>
        <position position="139"/>
    </location>
</feature>
<feature type="active site" description="Proton acceptor" evidence="1">
    <location>
        <position position="177"/>
    </location>
</feature>
<feature type="binding site" evidence="1">
    <location>
        <begin position="11"/>
        <end position="12"/>
    </location>
    <ligand>
        <name>NADP(+)</name>
        <dbReference type="ChEBI" id="CHEBI:58349"/>
    </ligand>
</feature>
<feature type="binding site" evidence="1">
    <location>
        <begin position="32"/>
        <end position="33"/>
    </location>
    <ligand>
        <name>NADP(+)</name>
        <dbReference type="ChEBI" id="CHEBI:58349"/>
    </ligand>
</feature>
<feature type="binding site" evidence="1">
    <location>
        <position position="39"/>
    </location>
    <ligand>
        <name>NADP(+)</name>
        <dbReference type="ChEBI" id="CHEBI:58349"/>
    </ligand>
</feature>
<feature type="binding site" evidence="1">
    <location>
        <position position="54"/>
    </location>
    <ligand>
        <name>NADP(+)</name>
        <dbReference type="ChEBI" id="CHEBI:58349"/>
    </ligand>
</feature>
<feature type="binding site" evidence="1">
    <location>
        <begin position="75"/>
        <end position="79"/>
    </location>
    <ligand>
        <name>NADP(+)</name>
        <dbReference type="ChEBI" id="CHEBI:58349"/>
    </ligand>
</feature>
<feature type="binding site" evidence="1">
    <location>
        <position position="92"/>
    </location>
    <ligand>
        <name>NADP(+)</name>
        <dbReference type="ChEBI" id="CHEBI:58349"/>
    </ligand>
</feature>
<feature type="binding site" evidence="1">
    <location>
        <position position="143"/>
    </location>
    <ligand>
        <name>NADP(+)</name>
        <dbReference type="ChEBI" id="CHEBI:58349"/>
    </ligand>
</feature>
<feature type="binding site" evidence="1">
    <location>
        <position position="168"/>
    </location>
    <ligand>
        <name>substrate</name>
    </ligand>
</feature>
<feature type="binding site" evidence="1">
    <location>
        <position position="169"/>
    </location>
    <ligand>
        <name>NADP(+)</name>
        <dbReference type="ChEBI" id="CHEBI:58349"/>
    </ligand>
</feature>
<feature type="binding site" evidence="1">
    <location>
        <position position="177"/>
    </location>
    <ligand>
        <name>NADP(+)</name>
        <dbReference type="ChEBI" id="CHEBI:58349"/>
    </ligand>
</feature>
<feature type="binding site" evidence="1">
    <location>
        <position position="179"/>
    </location>
    <ligand>
        <name>substrate</name>
    </ligand>
</feature>
<feature type="binding site" evidence="1">
    <location>
        <position position="186"/>
    </location>
    <ligand>
        <name>substrate</name>
    </ligand>
</feature>
<feature type="binding site" evidence="1">
    <location>
        <begin position="200"/>
        <end position="203"/>
    </location>
    <ligand>
        <name>substrate</name>
    </ligand>
</feature>
<feature type="binding site" evidence="1">
    <location>
        <position position="213"/>
    </location>
    <ligand>
        <name>substrate</name>
    </ligand>
</feature>
<feature type="binding site" evidence="1">
    <location>
        <position position="292"/>
    </location>
    <ligand>
        <name>substrate</name>
    </ligand>
</feature>
<gene>
    <name evidence="1" type="primary">hldD</name>
    <name type="synonym">rfaD</name>
    <name type="ordered locus">PA3337</name>
</gene>
<dbReference type="EC" id="5.1.3.20" evidence="1"/>
<dbReference type="EMBL" id="AE004091">
    <property type="protein sequence ID" value="AAG06725.1"/>
    <property type="status" value="ALT_INIT"/>
    <property type="molecule type" value="Genomic_DNA"/>
</dbReference>
<dbReference type="PIR" id="C83228">
    <property type="entry name" value="C83228"/>
</dbReference>
<dbReference type="RefSeq" id="NP_252027.1">
    <property type="nucleotide sequence ID" value="NC_002516.2"/>
</dbReference>
<dbReference type="RefSeq" id="WP_003113140.1">
    <property type="nucleotide sequence ID" value="NZ_JASSSF010000014.1"/>
</dbReference>
<dbReference type="SMR" id="Q9HYQ8"/>
<dbReference type="FunCoup" id="Q9HYQ8">
    <property type="interactions" value="344"/>
</dbReference>
<dbReference type="STRING" id="208964.PA3337"/>
<dbReference type="PaxDb" id="208964-PA3337"/>
<dbReference type="GeneID" id="882502"/>
<dbReference type="KEGG" id="pae:PA3337"/>
<dbReference type="PATRIC" id="fig|208964.12.peg.3495"/>
<dbReference type="PseudoCAP" id="PA3337"/>
<dbReference type="HOGENOM" id="CLU_007383_1_3_6"/>
<dbReference type="InParanoid" id="Q9HYQ8"/>
<dbReference type="OrthoDB" id="9803010at2"/>
<dbReference type="PhylomeDB" id="Q9HYQ8"/>
<dbReference type="UniPathway" id="UPA00356">
    <property type="reaction ID" value="UER00440"/>
</dbReference>
<dbReference type="UniPathway" id="UPA00958"/>
<dbReference type="Proteomes" id="UP000002438">
    <property type="component" value="Chromosome"/>
</dbReference>
<dbReference type="GO" id="GO:0008712">
    <property type="term" value="F:ADP-glyceromanno-heptose 6-epimerase activity"/>
    <property type="evidence" value="ECO:0007669"/>
    <property type="project" value="UniProtKB-UniRule"/>
</dbReference>
<dbReference type="GO" id="GO:0050661">
    <property type="term" value="F:NADP binding"/>
    <property type="evidence" value="ECO:0007669"/>
    <property type="project" value="InterPro"/>
</dbReference>
<dbReference type="GO" id="GO:0097171">
    <property type="term" value="P:ADP-L-glycero-beta-D-manno-heptose biosynthetic process"/>
    <property type="evidence" value="ECO:0007669"/>
    <property type="project" value="UniProtKB-UniPathway"/>
</dbReference>
<dbReference type="GO" id="GO:0009244">
    <property type="term" value="P:lipopolysaccharide core region biosynthetic process"/>
    <property type="evidence" value="ECO:0007669"/>
    <property type="project" value="UniProtKB-UniPathway"/>
</dbReference>
<dbReference type="CDD" id="cd05248">
    <property type="entry name" value="ADP_GME_SDR_e"/>
    <property type="match status" value="1"/>
</dbReference>
<dbReference type="Gene3D" id="3.40.50.720">
    <property type="entry name" value="NAD(P)-binding Rossmann-like Domain"/>
    <property type="match status" value="1"/>
</dbReference>
<dbReference type="Gene3D" id="3.90.25.10">
    <property type="entry name" value="UDP-galactose 4-epimerase, domain 1"/>
    <property type="match status" value="1"/>
</dbReference>
<dbReference type="HAMAP" id="MF_01601">
    <property type="entry name" value="Heptose_epimerase"/>
    <property type="match status" value="1"/>
</dbReference>
<dbReference type="InterPro" id="IPR001509">
    <property type="entry name" value="Epimerase_deHydtase"/>
</dbReference>
<dbReference type="InterPro" id="IPR011912">
    <property type="entry name" value="Heptose_epim"/>
</dbReference>
<dbReference type="InterPro" id="IPR036291">
    <property type="entry name" value="NAD(P)-bd_dom_sf"/>
</dbReference>
<dbReference type="NCBIfam" id="TIGR02197">
    <property type="entry name" value="heptose_epim"/>
    <property type="match status" value="1"/>
</dbReference>
<dbReference type="PANTHER" id="PTHR43103:SF3">
    <property type="entry name" value="ADP-L-GLYCERO-D-MANNO-HEPTOSE-6-EPIMERASE"/>
    <property type="match status" value="1"/>
</dbReference>
<dbReference type="PANTHER" id="PTHR43103">
    <property type="entry name" value="NUCLEOSIDE-DIPHOSPHATE-SUGAR EPIMERASE"/>
    <property type="match status" value="1"/>
</dbReference>
<dbReference type="Pfam" id="PF01370">
    <property type="entry name" value="Epimerase"/>
    <property type="match status" value="1"/>
</dbReference>
<dbReference type="SUPFAM" id="SSF51735">
    <property type="entry name" value="NAD(P)-binding Rossmann-fold domains"/>
    <property type="match status" value="1"/>
</dbReference>
<sequence>MSIIVTGAAGFIGSNLLQALNRRGETDIIAVDDLTDGEQFRNLADADIADYLDQNDFLERYARGDFGTVRALFHQGACASTLESNGRYMMENNYRYSCRLLESSLELGVPFLYASSAAVYGSGRTFREARQYERPLNVYGYSKFLFDQRVRRALPQARSQVVGLRYFNVYGPREEHKGRMASVAYHCYQQLRRDGRVELFGEHGGFPPGGHLRDFVAVEDVARVNLHFFDHPQRSGIFNLGSGQARTFNEVALAVINSVRANADQPPLSLQQAVESGLLGYREFPESLRARYQSHTCADLELLREAGYRDDFQSLEEGVAGYCRWLARSA</sequence>
<organism>
    <name type="scientific">Pseudomonas aeruginosa (strain ATCC 15692 / DSM 22644 / CIP 104116 / JCM 14847 / LMG 12228 / 1C / PRS 101 / PAO1)</name>
    <dbReference type="NCBI Taxonomy" id="208964"/>
    <lineage>
        <taxon>Bacteria</taxon>
        <taxon>Pseudomonadati</taxon>
        <taxon>Pseudomonadota</taxon>
        <taxon>Gammaproteobacteria</taxon>
        <taxon>Pseudomonadales</taxon>
        <taxon>Pseudomonadaceae</taxon>
        <taxon>Pseudomonas</taxon>
    </lineage>
</organism>
<accession>Q9HYQ8</accession>
<protein>
    <recommendedName>
        <fullName evidence="1">ADP-L-glycero-D-manno-heptose-6-epimerase</fullName>
        <ecNumber evidence="1">5.1.3.20</ecNumber>
    </recommendedName>
    <alternativeName>
        <fullName evidence="1">ADP-L-glycero-beta-D-manno-heptose-6-epimerase</fullName>
        <shortName evidence="1">ADP-glyceromanno-heptose 6-epimerase</shortName>
        <shortName evidence="1">ADP-hep 6-epimerase</shortName>
        <shortName evidence="1">AGME</shortName>
    </alternativeName>
</protein>
<comment type="function">
    <text evidence="1">Catalyzes the interconversion between ADP-D-glycero-beta-D-manno-heptose and ADP-L-glycero-beta-D-manno-heptose via an epimerization at carbon 6 of the heptose.</text>
</comment>
<comment type="catalytic activity">
    <reaction evidence="1">
        <text>ADP-D-glycero-beta-D-manno-heptose = ADP-L-glycero-beta-D-manno-heptose</text>
        <dbReference type="Rhea" id="RHEA:17577"/>
        <dbReference type="ChEBI" id="CHEBI:59967"/>
        <dbReference type="ChEBI" id="CHEBI:61506"/>
        <dbReference type="EC" id="5.1.3.20"/>
    </reaction>
</comment>
<comment type="cofactor">
    <cofactor evidence="1">
        <name>NADP(+)</name>
        <dbReference type="ChEBI" id="CHEBI:58349"/>
    </cofactor>
    <text evidence="1">Binds 1 NADP(+) per subunit.</text>
</comment>
<comment type="pathway">
    <text evidence="1">Nucleotide-sugar biosynthesis; ADP-L-glycero-beta-D-manno-heptose biosynthesis; ADP-L-glycero-beta-D-manno-heptose from D-glycero-beta-D-manno-heptose 7-phosphate: step 4/4.</text>
</comment>
<comment type="pathway">
    <text>Bacterial outer membrane biogenesis; LPS core biosynthesis.</text>
</comment>
<comment type="subunit">
    <text evidence="1">Homopentamer.</text>
</comment>
<comment type="domain">
    <text evidence="1">Contains a large N-terminal NADP-binding domain, and a smaller C-terminal substrate-binding domain.</text>
</comment>
<comment type="similarity">
    <text evidence="1">Belongs to the NAD(P)-dependent epimerase/dehydratase family. HldD subfamily.</text>
</comment>
<comment type="sequence caution" evidence="2">
    <conflict type="erroneous initiation">
        <sequence resource="EMBL-CDS" id="AAG06725"/>
    </conflict>
</comment>